<sequence>MIIPWKELETETLNSLIESFVLREGTDYGEHERSLEQKVEDVRRQLKNGEVLLVWSELHETINIMPRGQFRAGQEEI</sequence>
<dbReference type="EMBL" id="CP000826">
    <property type="protein sequence ID" value="ABV43670.1"/>
    <property type="molecule type" value="Genomic_DNA"/>
</dbReference>
<dbReference type="SMR" id="A8GKN0"/>
<dbReference type="STRING" id="399741.Spro_4577"/>
<dbReference type="KEGG" id="spe:Spro_4577"/>
<dbReference type="eggNOG" id="COG3089">
    <property type="taxonomic scope" value="Bacteria"/>
</dbReference>
<dbReference type="HOGENOM" id="CLU_186759_1_0_6"/>
<dbReference type="OrthoDB" id="6120729at2"/>
<dbReference type="Gene3D" id="1.10.10.610">
    <property type="entry name" value="YehU-like"/>
    <property type="match status" value="1"/>
</dbReference>
<dbReference type="HAMAP" id="MF_00690">
    <property type="entry name" value="UPF0270"/>
    <property type="match status" value="1"/>
</dbReference>
<dbReference type="InterPro" id="IPR010648">
    <property type="entry name" value="UPF0270"/>
</dbReference>
<dbReference type="InterPro" id="IPR036685">
    <property type="entry name" value="YehU-like_sf"/>
</dbReference>
<dbReference type="NCBIfam" id="NF003438">
    <property type="entry name" value="PRK04966.1"/>
    <property type="match status" value="1"/>
</dbReference>
<dbReference type="Pfam" id="PF06794">
    <property type="entry name" value="UPF0270"/>
    <property type="match status" value="1"/>
</dbReference>
<dbReference type="PIRSF" id="PIRSF006169">
    <property type="entry name" value="UCP006169"/>
    <property type="match status" value="1"/>
</dbReference>
<dbReference type="SUPFAM" id="SSF118001">
    <property type="entry name" value="YehU-like"/>
    <property type="match status" value="1"/>
</dbReference>
<reference key="1">
    <citation type="submission" date="2007-09" db="EMBL/GenBank/DDBJ databases">
        <title>Complete sequence of chromosome of Serratia proteamaculans 568.</title>
        <authorList>
            <consortium name="US DOE Joint Genome Institute"/>
            <person name="Copeland A."/>
            <person name="Lucas S."/>
            <person name="Lapidus A."/>
            <person name="Barry K."/>
            <person name="Glavina del Rio T."/>
            <person name="Dalin E."/>
            <person name="Tice H."/>
            <person name="Pitluck S."/>
            <person name="Chain P."/>
            <person name="Malfatti S."/>
            <person name="Shin M."/>
            <person name="Vergez L."/>
            <person name="Schmutz J."/>
            <person name="Larimer F."/>
            <person name="Land M."/>
            <person name="Hauser L."/>
            <person name="Kyrpides N."/>
            <person name="Kim E."/>
            <person name="Taghavi S."/>
            <person name="Newman L."/>
            <person name="Vangronsveld J."/>
            <person name="van der Lelie D."/>
            <person name="Richardson P."/>
        </authorList>
    </citation>
    <scope>NUCLEOTIDE SEQUENCE [LARGE SCALE GENOMIC DNA]</scope>
    <source>
        <strain>568</strain>
    </source>
</reference>
<gene>
    <name type="ordered locus">Spro_4577</name>
</gene>
<evidence type="ECO:0000255" key="1">
    <source>
        <dbReference type="HAMAP-Rule" id="MF_00690"/>
    </source>
</evidence>
<accession>A8GKN0</accession>
<organism>
    <name type="scientific">Serratia proteamaculans (strain 568)</name>
    <dbReference type="NCBI Taxonomy" id="399741"/>
    <lineage>
        <taxon>Bacteria</taxon>
        <taxon>Pseudomonadati</taxon>
        <taxon>Pseudomonadota</taxon>
        <taxon>Gammaproteobacteria</taxon>
        <taxon>Enterobacterales</taxon>
        <taxon>Yersiniaceae</taxon>
        <taxon>Serratia</taxon>
    </lineage>
</organism>
<comment type="similarity">
    <text evidence="1">Belongs to the UPF0270 family.</text>
</comment>
<proteinExistence type="inferred from homology"/>
<name>Y4577_SERP5</name>
<protein>
    <recommendedName>
        <fullName evidence="1">UPF0270 protein Spro_4577</fullName>
    </recommendedName>
</protein>
<feature type="chain" id="PRO_1000062017" description="UPF0270 protein Spro_4577">
    <location>
        <begin position="1"/>
        <end position="77"/>
    </location>
</feature>